<accession>A3AF13</accession>
<accession>Q0DUD1</accession>
<accession>Q10QK5</accession>
<dbReference type="EC" id="3.4.19.12"/>
<dbReference type="EMBL" id="DP000009">
    <property type="protein sequence ID" value="ABF94422.1"/>
    <property type="status" value="ALT_SEQ"/>
    <property type="molecule type" value="Genomic_DNA"/>
</dbReference>
<dbReference type="EMBL" id="AP008209">
    <property type="protein sequence ID" value="BAF11157.2"/>
    <property type="status" value="ALT_SEQ"/>
    <property type="molecule type" value="Genomic_DNA"/>
</dbReference>
<dbReference type="EMBL" id="AP014959">
    <property type="status" value="NOT_ANNOTATED_CDS"/>
    <property type="molecule type" value="Genomic_DNA"/>
</dbReference>
<dbReference type="EMBL" id="CM000140">
    <property type="status" value="NOT_ANNOTATED_CDS"/>
    <property type="molecule type" value="Genomic_DNA"/>
</dbReference>
<dbReference type="SMR" id="A3AF13"/>
<dbReference type="FunCoup" id="A3AF13">
    <property type="interactions" value="1700"/>
</dbReference>
<dbReference type="STRING" id="39947.A3AF13"/>
<dbReference type="MEROPS" id="C19.068"/>
<dbReference type="iPTMnet" id="A3AF13"/>
<dbReference type="PaxDb" id="39947-A3AF13"/>
<dbReference type="KEGG" id="dosa:Os03g0192800"/>
<dbReference type="eggNOG" id="KOG1863">
    <property type="taxonomic scope" value="Eukaryota"/>
</dbReference>
<dbReference type="HOGENOM" id="CLU_008279_9_0_1"/>
<dbReference type="InParanoid" id="A3AF13"/>
<dbReference type="Proteomes" id="UP000000763">
    <property type="component" value="Chromosome 3"/>
</dbReference>
<dbReference type="Proteomes" id="UP000007752">
    <property type="component" value="Chromosome 3"/>
</dbReference>
<dbReference type="Proteomes" id="UP000059680">
    <property type="component" value="Chromosome 3"/>
</dbReference>
<dbReference type="GO" id="GO:0005829">
    <property type="term" value="C:cytosol"/>
    <property type="evidence" value="ECO:0000318"/>
    <property type="project" value="GO_Central"/>
</dbReference>
<dbReference type="GO" id="GO:0005634">
    <property type="term" value="C:nucleus"/>
    <property type="evidence" value="ECO:0000318"/>
    <property type="project" value="GO_Central"/>
</dbReference>
<dbReference type="GO" id="GO:0004843">
    <property type="term" value="F:cysteine-type deubiquitinase activity"/>
    <property type="evidence" value="ECO:0000318"/>
    <property type="project" value="GO_Central"/>
</dbReference>
<dbReference type="GO" id="GO:0004197">
    <property type="term" value="F:cysteine-type endopeptidase activity"/>
    <property type="evidence" value="ECO:0007669"/>
    <property type="project" value="InterPro"/>
</dbReference>
<dbReference type="GO" id="GO:0016579">
    <property type="term" value="P:protein deubiquitination"/>
    <property type="evidence" value="ECO:0007669"/>
    <property type="project" value="InterPro"/>
</dbReference>
<dbReference type="GO" id="GO:0006508">
    <property type="term" value="P:proteolysis"/>
    <property type="evidence" value="ECO:0007669"/>
    <property type="project" value="UniProtKB-KW"/>
</dbReference>
<dbReference type="GO" id="GO:0031647">
    <property type="term" value="P:regulation of protein stability"/>
    <property type="evidence" value="ECO:0000318"/>
    <property type="project" value="GO_Central"/>
</dbReference>
<dbReference type="CDD" id="cd02668">
    <property type="entry name" value="Peptidase_C19L"/>
    <property type="match status" value="1"/>
</dbReference>
<dbReference type="CDD" id="cd01795">
    <property type="entry name" value="Ubl_USP48"/>
    <property type="match status" value="1"/>
</dbReference>
<dbReference type="FunFam" id="3.10.20.90:FF:000201">
    <property type="entry name" value="Ubiquitin carboxyl-terminal hydrolase 26"/>
    <property type="match status" value="1"/>
</dbReference>
<dbReference type="FunFam" id="3.30.2230.10:FF:000005">
    <property type="entry name" value="Ubiquitin carboxyl-terminal hydrolase 26"/>
    <property type="match status" value="1"/>
</dbReference>
<dbReference type="FunFam" id="3.30.2230.10:FF:000006">
    <property type="entry name" value="Ubiquitin carboxyl-terminal hydrolase 26"/>
    <property type="match status" value="1"/>
</dbReference>
<dbReference type="FunFam" id="3.90.70.10:FF:000049">
    <property type="entry name" value="ubiquitin carboxyl-terminal hydrolase 48"/>
    <property type="match status" value="1"/>
</dbReference>
<dbReference type="Gene3D" id="3.90.70.10">
    <property type="entry name" value="Cysteine proteinases"/>
    <property type="match status" value="1"/>
</dbReference>
<dbReference type="Gene3D" id="3.30.2230.10">
    <property type="entry name" value="DUSP-like"/>
    <property type="match status" value="2"/>
</dbReference>
<dbReference type="Gene3D" id="3.10.20.90">
    <property type="entry name" value="Phosphatidylinositol 3-kinase Catalytic Subunit, Chain A, domain 1"/>
    <property type="match status" value="1"/>
</dbReference>
<dbReference type="InterPro" id="IPR035927">
    <property type="entry name" value="DUSP-like_sf"/>
</dbReference>
<dbReference type="InterPro" id="IPR038765">
    <property type="entry name" value="Papain-like_cys_pep_sf"/>
</dbReference>
<dbReference type="InterPro" id="IPR006615">
    <property type="entry name" value="Pept_C19_DUSP"/>
</dbReference>
<dbReference type="InterPro" id="IPR050164">
    <property type="entry name" value="Peptidase_C19"/>
</dbReference>
<dbReference type="InterPro" id="IPR001394">
    <property type="entry name" value="Peptidase_C19_UCH"/>
</dbReference>
<dbReference type="InterPro" id="IPR000626">
    <property type="entry name" value="Ubiquitin-like_dom"/>
</dbReference>
<dbReference type="InterPro" id="IPR029071">
    <property type="entry name" value="Ubiquitin-like_domsf"/>
</dbReference>
<dbReference type="InterPro" id="IPR044743">
    <property type="entry name" value="Ubl_USP48"/>
</dbReference>
<dbReference type="InterPro" id="IPR033841">
    <property type="entry name" value="USP48"/>
</dbReference>
<dbReference type="InterPro" id="IPR018200">
    <property type="entry name" value="USP_CS"/>
</dbReference>
<dbReference type="InterPro" id="IPR028889">
    <property type="entry name" value="USP_dom"/>
</dbReference>
<dbReference type="PANTHER" id="PTHR24006">
    <property type="entry name" value="UBIQUITIN CARBOXYL-TERMINAL HYDROLASE"/>
    <property type="match status" value="1"/>
</dbReference>
<dbReference type="PANTHER" id="PTHR24006:SF722">
    <property type="entry name" value="UBIQUITIN CARBOXYL-TERMINAL HYDROLASE 48"/>
    <property type="match status" value="1"/>
</dbReference>
<dbReference type="Pfam" id="PF06337">
    <property type="entry name" value="DUSP"/>
    <property type="match status" value="2"/>
</dbReference>
<dbReference type="Pfam" id="PF00443">
    <property type="entry name" value="UCH"/>
    <property type="match status" value="1"/>
</dbReference>
<dbReference type="SMART" id="SM00695">
    <property type="entry name" value="DUSP"/>
    <property type="match status" value="1"/>
</dbReference>
<dbReference type="SUPFAM" id="SSF54001">
    <property type="entry name" value="Cysteine proteinases"/>
    <property type="match status" value="1"/>
</dbReference>
<dbReference type="SUPFAM" id="SSF143791">
    <property type="entry name" value="DUSP-like"/>
    <property type="match status" value="2"/>
</dbReference>
<dbReference type="SUPFAM" id="SSF54236">
    <property type="entry name" value="Ubiquitin-like"/>
    <property type="match status" value="1"/>
</dbReference>
<dbReference type="PROSITE" id="PS51283">
    <property type="entry name" value="DUSP"/>
    <property type="match status" value="3"/>
</dbReference>
<dbReference type="PROSITE" id="PS50053">
    <property type="entry name" value="UBIQUITIN_2"/>
    <property type="match status" value="1"/>
</dbReference>
<dbReference type="PROSITE" id="PS00972">
    <property type="entry name" value="USP_1"/>
    <property type="match status" value="1"/>
</dbReference>
<dbReference type="PROSITE" id="PS00973">
    <property type="entry name" value="USP_2"/>
    <property type="match status" value="1"/>
</dbReference>
<dbReference type="PROSITE" id="PS50235">
    <property type="entry name" value="USP_3"/>
    <property type="match status" value="1"/>
</dbReference>
<protein>
    <recommendedName>
        <fullName>Ubiquitin carboxyl-terminal hydrolase 26</fullName>
        <ecNumber>3.4.19.12</ecNumber>
    </recommendedName>
    <alternativeName>
        <fullName>Deubiquitinating enzyme 26</fullName>
    </alternativeName>
    <alternativeName>
        <fullName>Ubiquitin thioesterase 26</fullName>
    </alternativeName>
    <alternativeName>
        <fullName>Ubiquitin-specific-processing protease 26</fullName>
    </alternativeName>
</protein>
<comment type="function">
    <text evidence="1">Recognizes and hydrolyzes the peptide bond at the C-terminal Gly of ubiquitin. Involved in the processing of poly-ubiquitin precursors as well as that of ubiquitinated proteins. Deubiquitinates H2BK143ub1 of histone H2B (By similarity).</text>
</comment>
<comment type="catalytic activity">
    <reaction>
        <text>Thiol-dependent hydrolysis of ester, thioester, amide, peptide and isopeptide bonds formed by the C-terminal Gly of ubiquitin (a 76-residue protein attached to proteins as an intracellular targeting signal).</text>
        <dbReference type="EC" id="3.4.19.12"/>
    </reaction>
</comment>
<comment type="subcellular location">
    <subcellularLocation>
        <location evidence="1">Nucleus</location>
    </subcellularLocation>
</comment>
<comment type="similarity">
    <text evidence="7">Belongs to the peptidase C19 family.</text>
</comment>
<comment type="sequence caution" evidence="7">
    <conflict type="erroneous gene model prediction">
        <sequence resource="EMBL-CDS" id="ABF94422"/>
    </conflict>
</comment>
<comment type="sequence caution" evidence="7">
    <conflict type="erroneous gene model prediction">
        <sequence resource="EMBL-CDS" id="BAF11157"/>
    </conflict>
</comment>
<organism>
    <name type="scientific">Oryza sativa subsp. japonica</name>
    <name type="common">Rice</name>
    <dbReference type="NCBI Taxonomy" id="39947"/>
    <lineage>
        <taxon>Eukaryota</taxon>
        <taxon>Viridiplantae</taxon>
        <taxon>Streptophyta</taxon>
        <taxon>Embryophyta</taxon>
        <taxon>Tracheophyta</taxon>
        <taxon>Spermatophyta</taxon>
        <taxon>Magnoliopsida</taxon>
        <taxon>Liliopsida</taxon>
        <taxon>Poales</taxon>
        <taxon>Poaceae</taxon>
        <taxon>BOP clade</taxon>
        <taxon>Oryzoideae</taxon>
        <taxon>Oryzeae</taxon>
        <taxon>Oryzinae</taxon>
        <taxon>Oryza</taxon>
        <taxon>Oryza sativa</taxon>
    </lineage>
</organism>
<name>UBP26_ORYSJ</name>
<keyword id="KW-0378">Hydrolase</keyword>
<keyword id="KW-0539">Nucleus</keyword>
<keyword id="KW-0645">Protease</keyword>
<keyword id="KW-1185">Reference proteome</keyword>
<keyword id="KW-0677">Repeat</keyword>
<keyword id="KW-0788">Thiol protease</keyword>
<keyword id="KW-0833">Ubl conjugation pathway</keyword>
<reference key="1">
    <citation type="journal article" date="2005" name="Genome Res.">
        <title>Sequence, annotation, and analysis of synteny between rice chromosome 3 and diverged grass species.</title>
        <authorList>
            <consortium name="The rice chromosome 3 sequencing consortium"/>
            <person name="Buell C.R."/>
            <person name="Yuan Q."/>
            <person name="Ouyang S."/>
            <person name="Liu J."/>
            <person name="Zhu W."/>
            <person name="Wang A."/>
            <person name="Maiti R."/>
            <person name="Haas B."/>
            <person name="Wortman J."/>
            <person name="Pertea M."/>
            <person name="Jones K.M."/>
            <person name="Kim M."/>
            <person name="Overton L."/>
            <person name="Tsitrin T."/>
            <person name="Fadrosh D."/>
            <person name="Bera J."/>
            <person name="Weaver B."/>
            <person name="Jin S."/>
            <person name="Johri S."/>
            <person name="Reardon M."/>
            <person name="Webb K."/>
            <person name="Hill J."/>
            <person name="Moffat K."/>
            <person name="Tallon L."/>
            <person name="Van Aken S."/>
            <person name="Lewis M."/>
            <person name="Utterback T."/>
            <person name="Feldblyum T."/>
            <person name="Zismann V."/>
            <person name="Iobst S."/>
            <person name="Hsiao J."/>
            <person name="de Vazeille A.R."/>
            <person name="Salzberg S.L."/>
            <person name="White O."/>
            <person name="Fraser C.M."/>
            <person name="Yu Y."/>
            <person name="Kim H."/>
            <person name="Rambo T."/>
            <person name="Currie J."/>
            <person name="Collura K."/>
            <person name="Kernodle-Thompson S."/>
            <person name="Wei F."/>
            <person name="Kudrna K."/>
            <person name="Ammiraju J.S.S."/>
            <person name="Luo M."/>
            <person name="Goicoechea J.L."/>
            <person name="Wing R.A."/>
            <person name="Henry D."/>
            <person name="Oates R."/>
            <person name="Palmer M."/>
            <person name="Pries G."/>
            <person name="Saski C."/>
            <person name="Simmons J."/>
            <person name="Soderlund C."/>
            <person name="Nelson W."/>
            <person name="de la Bastide M."/>
            <person name="Spiegel L."/>
            <person name="Nascimento L."/>
            <person name="Huang E."/>
            <person name="Preston R."/>
            <person name="Zutavern T."/>
            <person name="Palmer L."/>
            <person name="O'Shaughnessy A."/>
            <person name="Dike S."/>
            <person name="McCombie W.R."/>
            <person name="Minx P."/>
            <person name="Cordum H."/>
            <person name="Wilson R."/>
            <person name="Jin W."/>
            <person name="Lee H.R."/>
            <person name="Jiang J."/>
            <person name="Jackson S."/>
        </authorList>
    </citation>
    <scope>NUCLEOTIDE SEQUENCE [LARGE SCALE GENOMIC DNA]</scope>
    <source>
        <strain>cv. Nipponbare</strain>
    </source>
</reference>
<reference key="2">
    <citation type="journal article" date="2005" name="Nature">
        <title>The map-based sequence of the rice genome.</title>
        <authorList>
            <consortium name="International rice genome sequencing project (IRGSP)"/>
        </authorList>
    </citation>
    <scope>NUCLEOTIDE SEQUENCE [LARGE SCALE GENOMIC DNA]</scope>
    <source>
        <strain>cv. Nipponbare</strain>
    </source>
</reference>
<reference key="3">
    <citation type="journal article" date="2008" name="Nucleic Acids Res.">
        <title>The rice annotation project database (RAP-DB): 2008 update.</title>
        <authorList>
            <consortium name="The rice annotation project (RAP)"/>
        </authorList>
    </citation>
    <scope>GENOME REANNOTATION</scope>
    <source>
        <strain>cv. Nipponbare</strain>
    </source>
</reference>
<reference key="4">
    <citation type="journal article" date="2013" name="Rice">
        <title>Improvement of the Oryza sativa Nipponbare reference genome using next generation sequence and optical map data.</title>
        <authorList>
            <person name="Kawahara Y."/>
            <person name="de la Bastide M."/>
            <person name="Hamilton J.P."/>
            <person name="Kanamori H."/>
            <person name="McCombie W.R."/>
            <person name="Ouyang S."/>
            <person name="Schwartz D.C."/>
            <person name="Tanaka T."/>
            <person name="Wu J."/>
            <person name="Zhou S."/>
            <person name="Childs K.L."/>
            <person name="Davidson R.M."/>
            <person name="Lin H."/>
            <person name="Quesada-Ocampo L."/>
            <person name="Vaillancourt B."/>
            <person name="Sakai H."/>
            <person name="Lee S.S."/>
            <person name="Kim J."/>
            <person name="Numa H."/>
            <person name="Itoh T."/>
            <person name="Buell C.R."/>
            <person name="Matsumoto T."/>
        </authorList>
    </citation>
    <scope>GENOME REANNOTATION</scope>
    <source>
        <strain>cv. Nipponbare</strain>
    </source>
</reference>
<reference key="5">
    <citation type="journal article" date="2005" name="PLoS Biol.">
        <title>The genomes of Oryza sativa: a history of duplications.</title>
        <authorList>
            <person name="Yu J."/>
            <person name="Wang J."/>
            <person name="Lin W."/>
            <person name="Li S."/>
            <person name="Li H."/>
            <person name="Zhou J."/>
            <person name="Ni P."/>
            <person name="Dong W."/>
            <person name="Hu S."/>
            <person name="Zeng C."/>
            <person name="Zhang J."/>
            <person name="Zhang Y."/>
            <person name="Li R."/>
            <person name="Xu Z."/>
            <person name="Li S."/>
            <person name="Li X."/>
            <person name="Zheng H."/>
            <person name="Cong L."/>
            <person name="Lin L."/>
            <person name="Yin J."/>
            <person name="Geng J."/>
            <person name="Li G."/>
            <person name="Shi J."/>
            <person name="Liu J."/>
            <person name="Lv H."/>
            <person name="Li J."/>
            <person name="Wang J."/>
            <person name="Deng Y."/>
            <person name="Ran L."/>
            <person name="Shi X."/>
            <person name="Wang X."/>
            <person name="Wu Q."/>
            <person name="Li C."/>
            <person name="Ren X."/>
            <person name="Wang J."/>
            <person name="Wang X."/>
            <person name="Li D."/>
            <person name="Liu D."/>
            <person name="Zhang X."/>
            <person name="Ji Z."/>
            <person name="Zhao W."/>
            <person name="Sun Y."/>
            <person name="Zhang Z."/>
            <person name="Bao J."/>
            <person name="Han Y."/>
            <person name="Dong L."/>
            <person name="Ji J."/>
            <person name="Chen P."/>
            <person name="Wu S."/>
            <person name="Liu J."/>
            <person name="Xiao Y."/>
            <person name="Bu D."/>
            <person name="Tan J."/>
            <person name="Yang L."/>
            <person name="Ye C."/>
            <person name="Zhang J."/>
            <person name="Xu J."/>
            <person name="Zhou Y."/>
            <person name="Yu Y."/>
            <person name="Zhang B."/>
            <person name="Zhuang S."/>
            <person name="Wei H."/>
            <person name="Liu B."/>
            <person name="Lei M."/>
            <person name="Yu H."/>
            <person name="Li Y."/>
            <person name="Xu H."/>
            <person name="Wei S."/>
            <person name="He X."/>
            <person name="Fang L."/>
            <person name="Zhang Z."/>
            <person name="Zhang Y."/>
            <person name="Huang X."/>
            <person name="Su Z."/>
            <person name="Tong W."/>
            <person name="Li J."/>
            <person name="Tong Z."/>
            <person name="Li S."/>
            <person name="Ye J."/>
            <person name="Wang L."/>
            <person name="Fang L."/>
            <person name="Lei T."/>
            <person name="Chen C.-S."/>
            <person name="Chen H.-C."/>
            <person name="Xu Z."/>
            <person name="Li H."/>
            <person name="Huang H."/>
            <person name="Zhang F."/>
            <person name="Xu H."/>
            <person name="Li N."/>
            <person name="Zhao C."/>
            <person name="Li S."/>
            <person name="Dong L."/>
            <person name="Huang Y."/>
            <person name="Li L."/>
            <person name="Xi Y."/>
            <person name="Qi Q."/>
            <person name="Li W."/>
            <person name="Zhang B."/>
            <person name="Hu W."/>
            <person name="Zhang Y."/>
            <person name="Tian X."/>
            <person name="Jiao Y."/>
            <person name="Liang X."/>
            <person name="Jin J."/>
            <person name="Gao L."/>
            <person name="Zheng W."/>
            <person name="Hao B."/>
            <person name="Liu S.-M."/>
            <person name="Wang W."/>
            <person name="Yuan L."/>
            <person name="Cao M."/>
            <person name="McDermott J."/>
            <person name="Samudrala R."/>
            <person name="Wang J."/>
            <person name="Wong G.K.-S."/>
            <person name="Yang H."/>
        </authorList>
    </citation>
    <scope>NUCLEOTIDE SEQUENCE [LARGE SCALE GENOMIC DNA]</scope>
    <source>
        <strain>cv. Nipponbare</strain>
    </source>
</reference>
<feature type="chain" id="PRO_0000293494" description="Ubiquitin carboxyl-terminal hydrolase 26">
    <location>
        <begin position="1"/>
        <end position="1079"/>
    </location>
</feature>
<feature type="domain" description="USP">
    <location>
        <begin position="106"/>
        <end position="446"/>
    </location>
</feature>
<feature type="domain" description="DUSP 1" evidence="3">
    <location>
        <begin position="495"/>
        <end position="598"/>
    </location>
</feature>
<feature type="domain" description="DUSP 2" evidence="3">
    <location>
        <begin position="613"/>
        <end position="715"/>
    </location>
</feature>
<feature type="domain" description="DUSP 3" evidence="3">
    <location>
        <begin position="738"/>
        <end position="862"/>
    </location>
</feature>
<feature type="domain" description="Ubiquitin-like" evidence="2">
    <location>
        <begin position="961"/>
        <end position="1037"/>
    </location>
</feature>
<feature type="region of interest" description="Disordered" evidence="6">
    <location>
        <begin position="1"/>
        <end position="21"/>
    </location>
</feature>
<feature type="region of interest" description="Disordered" evidence="6">
    <location>
        <begin position="384"/>
        <end position="419"/>
    </location>
</feature>
<feature type="region of interest" description="Disordered" evidence="6">
    <location>
        <begin position="948"/>
        <end position="972"/>
    </location>
</feature>
<feature type="compositionally biased region" description="Basic residues" evidence="6">
    <location>
        <begin position="1"/>
        <end position="12"/>
    </location>
</feature>
<feature type="compositionally biased region" description="Basic and acidic residues" evidence="6">
    <location>
        <begin position="388"/>
        <end position="401"/>
    </location>
</feature>
<feature type="compositionally biased region" description="Polar residues" evidence="6">
    <location>
        <begin position="402"/>
        <end position="417"/>
    </location>
</feature>
<feature type="active site" description="Nucleophile" evidence="4 5">
    <location>
        <position position="115"/>
    </location>
</feature>
<feature type="active site" description="Proton acceptor" evidence="4 5">
    <location>
        <position position="359"/>
    </location>
</feature>
<sequence length="1079" mass="119884">MSRPNTRNKSKRPRADDCESPSAVFKKIHSTGAITKGDIKQLYMVWKPVCHGCHGNSKDSPNCFCGLIPAANGVRKSGLWQRTNEIIRALGPNPSTDLRDSTETPAGLTNLGATCYANSILQCLYMNTSFRLGIFSLEPDILKMHPVLDQLARLFAQLHSSKMAFIDSAPFIKTLELDNGVQQDSHEFLTLFLSLLEGSLSHSKVPGARTIVQHLFRGSVSHVTRCSSCGRDSEASSKMEDFYELELNIKGLNNLEQSLDDYLSTEALDGENQYFCESCQKRVDATRCIKLRSLPPVVNFQLKRYVFLPKTTTKKKISSAFSFPGQLDMGKRLSNPSSSYTYGLSAILIHKGSAANSGHYVAHVKDESNGQWWEFDDEHVSKLGLHPFGEKPGKSSDKTDQKPQGSSTADSVTNDDNNSCHEAAFTSTMEEMFSSTDAYMLMYKRIAKDENGIESNNISSNNSLPHHFVDEIDERNTSYVKECEEYESKKDVHLAYITERRQEVKSVLTEAPATPEEDSYFWISTDWLRQWADNVNPPSPIITGVRVHSSIDNSPIQCEHGKVPASKVTSMKRLSAGAWHKLFSKYGGGPTLSSDDFCMECLKDGAKNSVSADVYRDRKASLRSIAEAALAGNNPDGPLYFVSRPWLTQWLRRKNVDIPSDADSGPTIALTCTHGNLLPEHASGAKRVTVPEDLWLFLYETSGMKIDDIVTFPSDSQPCGICSQQLSVVASVEDNLRAVKLKQRQSHEKLTSGKSLALHPGQKYYLVPSSWLSEWRAYITATGKNISSLPEPQSLEVTINSLICEKHSRLLQRPLDLVCKRGTITQKASNTDGLTMISESDWILFSEEWNVAHGKGLCAEIVFSKSSQDNLQSSEAVPILVEDLDQSTNDLSNDLGGREPYVRTDPEVCEECIGEKESCALVEKLNYQNEDIQVYLVRGKEAPKSIREASAAVPVPDRRTSKRSRRTTSGNSISLKVSGSTTVYQLKLMIWESLGIVKENQELHKGSVEIEDDFATLADKCIFPGDVLWVKDSEIYENRDIADEISEQKVVVQTEEGFRGTLLTSSASAQLCQDISFSD</sequence>
<gene>
    <name type="primary">UBP26</name>
    <name type="ordered locus">Os03g0192800</name>
    <name type="ordered locus">LOC_Os03g09260</name>
    <name type="ORF">OsJ_009385</name>
</gene>
<evidence type="ECO:0000250" key="1"/>
<evidence type="ECO:0000255" key="2">
    <source>
        <dbReference type="PROSITE-ProRule" id="PRU00214"/>
    </source>
</evidence>
<evidence type="ECO:0000255" key="3">
    <source>
        <dbReference type="PROSITE-ProRule" id="PRU00613"/>
    </source>
</evidence>
<evidence type="ECO:0000255" key="4">
    <source>
        <dbReference type="PROSITE-ProRule" id="PRU10092"/>
    </source>
</evidence>
<evidence type="ECO:0000255" key="5">
    <source>
        <dbReference type="PROSITE-ProRule" id="PRU10093"/>
    </source>
</evidence>
<evidence type="ECO:0000256" key="6">
    <source>
        <dbReference type="SAM" id="MobiDB-lite"/>
    </source>
</evidence>
<evidence type="ECO:0000305" key="7"/>
<proteinExistence type="inferred from homology"/>